<evidence type="ECO:0000250" key="1">
    <source>
        <dbReference type="UniProtKB" id="Q13137"/>
    </source>
</evidence>
<evidence type="ECO:0000255" key="2"/>
<evidence type="ECO:0000256" key="3">
    <source>
        <dbReference type="SAM" id="MobiDB-lite"/>
    </source>
</evidence>
<evidence type="ECO:0000269" key="4">
    <source>
    </source>
</evidence>
<evidence type="ECO:0000303" key="5">
    <source>
    </source>
</evidence>
<evidence type="ECO:0000303" key="6">
    <source>
    </source>
</evidence>
<evidence type="ECO:0000305" key="7"/>
<feature type="chain" id="PRO_0000312339" description="Calcium-binding and coiled-coil domain-containing protein 2">
    <location>
        <begin position="1"/>
        <end position="331"/>
    </location>
</feature>
<feature type="region of interest" description="Disordered" evidence="3">
    <location>
        <begin position="189"/>
        <end position="310"/>
    </location>
</feature>
<feature type="region of interest" description="Interaction with LGALS8" evidence="1">
    <location>
        <begin position="292"/>
        <end position="302"/>
    </location>
</feature>
<feature type="coiled-coil region" evidence="2">
    <location>
        <begin position="132"/>
        <end position="309"/>
    </location>
</feature>
<feature type="short sequence motif" description="CLIR" evidence="1">
    <location>
        <begin position="128"/>
        <end position="131"/>
    </location>
</feature>
<feature type="short sequence motif" description="LIR-like" evidence="1">
    <location>
        <begin position="190"/>
        <end position="193"/>
    </location>
</feature>
<feature type="splice variant" id="VSP_029830" description="In isoform 4." evidence="6">
    <location>
        <begin position="201"/>
        <end position="291"/>
    </location>
</feature>
<feature type="splice variant" id="VSP_029831" description="In isoform 5." evidence="6">
    <location>
        <begin position="208"/>
        <end position="305"/>
    </location>
</feature>
<feature type="splice variant" id="VSP_029832" description="In isoform 2." evidence="5 6">
    <location>
        <begin position="222"/>
        <end position="291"/>
    </location>
</feature>
<feature type="splice variant" id="VSP_029833" description="In isoform 3." evidence="6">
    <location>
        <begin position="223"/>
        <end position="320"/>
    </location>
</feature>
<accession>A2A6M5</accession>
<accession>Q3TK36</accession>
<accession>Q3TKZ6</accession>
<accession>Q3TL30</accession>
<accession>Q9CWE3</accession>
<gene>
    <name evidence="1" type="primary">Calcoco2</name>
    <name type="synonym">Ndp52</name>
    <name type="synonym">Ndp52l1</name>
</gene>
<proteinExistence type="evidence at transcript level"/>
<organism>
    <name type="scientific">Mus musculus</name>
    <name type="common">Mouse</name>
    <dbReference type="NCBI Taxonomy" id="10090"/>
    <lineage>
        <taxon>Eukaryota</taxon>
        <taxon>Metazoa</taxon>
        <taxon>Chordata</taxon>
        <taxon>Craniata</taxon>
        <taxon>Vertebrata</taxon>
        <taxon>Euteleostomi</taxon>
        <taxon>Mammalia</taxon>
        <taxon>Eutheria</taxon>
        <taxon>Euarchontoglires</taxon>
        <taxon>Glires</taxon>
        <taxon>Rodentia</taxon>
        <taxon>Myomorpha</taxon>
        <taxon>Muroidea</taxon>
        <taxon>Muridae</taxon>
        <taxon>Murinae</taxon>
        <taxon>Mus</taxon>
        <taxon>Mus</taxon>
    </lineage>
</organism>
<protein>
    <recommendedName>
        <fullName evidence="1">Calcium-binding and coiled-coil domain-containing protein 2</fullName>
    </recommendedName>
    <alternativeName>
        <fullName evidence="1">Nuclear domain 10 protein NDP52</fullName>
        <shortName evidence="1">Nuclear domain 10 protein 52</shortName>
    </alternativeName>
</protein>
<sequence length="331" mass="40136">MDQCPIPTLLEHGNFSQVLFNNVEKFYAPRGDIMCYYTLTEKFIPRRKDWIGIFKVGWKTTQEYYTFMWAPLPKDQNKDSATQQEIQFKAYYLPKDVERYQFCYVDEDGLVRGTSVPFQFCPDPDEDIMVVINKEKVEEMEQLSEELYQQNQELKDKYADLHEQLQRKQVALEATQRVNKTLEHKVEEKASWEKEKASWEEEKASWEEEKASWEEEKASWEEEKASWEEEKASWEEEKASWEEEKASWEEEKASWEEEKASWEEEKASWEEEKASWEEEKASWEEEKASWEKEKASWEEEKASWEKEKAPWEVEKAPWKEVKAYWWNDLHR</sequence>
<comment type="function">
    <text evidence="1">Xenophagy-specific receptor required for autophagy-mediated intracellular bacteria degradation (By similarity). Acts as an effector protein of galectin-sensed membrane damage that restricts the proliferation of infecting pathogens upon entry into the cytosol by targeting LGALS8-associated bacteria for autophagy (By similarity). Initially orchestrates bacteria targeting to autophagosomes and subsequently ensures pathogen degradation by regulating pathogen-containing autophagosome maturation (By similarity). Bacteria targeting to autophagosomes relies on its interaction with MAP1LC3A, MAP1LC3B and/or GABARAPL2, whereas regulation of pathogen-containing autophagosome maturation requires the interaction with MAP3LC3C (By similarity). May play a role in ruffle formation and actin cytoskeleton organization and seems to negatively regulate constitutive secretion (By similarity).</text>
</comment>
<comment type="subunit">
    <text evidence="1">Dimer. Part of a complex consisting of CALCOCO2, TAX1BP1 and MYO6. Interacts with MYO6 (By similarity). Interacts with GEMIN4. Interacts with ATG8 family members MAP1LC3A, MAP1LC3B, GABARAP, GABARAPL1 and GABARAPL2. Interacts with ATG8 family member MAP1LC3C. Interacts with LGALS8. Interacts with TOM1; the interaction is indirect and is mediated by MYO6, which acts as a bridge between TOM1 and CALCOCO2 (By similarity). Interacts with AZI2 (By similarity).</text>
</comment>
<comment type="subcellular location">
    <subcellularLocation>
        <location evidence="1">Cytoplasm</location>
        <location evidence="1">Perinuclear region</location>
    </subcellularLocation>
    <subcellularLocation>
        <location evidence="1">Cytoplasm</location>
        <location evidence="1">Cytoskeleton</location>
    </subcellularLocation>
    <subcellularLocation>
        <location evidence="1">Cytoplasmic vesicle</location>
        <location evidence="1">Autophagosome membrane</location>
        <topology evidence="7">Peripheral membrane protein</topology>
    </subcellularLocation>
</comment>
<comment type="alternative products">
    <event type="alternative splicing"/>
    <isoform>
        <id>A2A6M5-1</id>
        <name>1</name>
        <sequence type="displayed"/>
    </isoform>
    <isoform>
        <id>A2A6M5-2</id>
        <name>2</name>
        <sequence type="described" ref="VSP_029832"/>
    </isoform>
    <isoform>
        <id>A2A6M5-3</id>
        <name>3</name>
        <sequence type="described" ref="VSP_029833"/>
    </isoform>
    <isoform>
        <id>A2A6M5-4</id>
        <name>4</name>
        <sequence type="described" ref="VSP_029830"/>
    </isoform>
    <isoform>
        <id>A2A6M5-5</id>
        <name>5</name>
        <sequence type="described" ref="VSP_029831"/>
    </isoform>
</comment>
<comment type="developmental stage">
    <text evidence="4">Expression is limited to the pluripotent cells of the early embryo and the germline. Expressed in blastocysts, epiblasts and purified primordial germ cells.</text>
</comment>
<comment type="domain">
    <text evidence="1">The LGALS8-binding domain is essential for the recruitment to cytosol-exposed infecting bacteria.</text>
</comment>
<comment type="domain">
    <text evidence="1">The CLIR (LC3C-interacting region) motif is required for interaction with MAP1LC3C, but dispensable for CALCOCO2-mediated autophagosome maturation.</text>
</comment>
<comment type="domain">
    <text evidence="1">The LIR-like motif is required for interaction with MAP1LC3A, MAP1LC3B and GABARAPL2, as well as for CALCOCO2-mediated autophagosome maturation.</text>
</comment>
<comment type="similarity">
    <text evidence="7">Belongs to the CALCOCO family.</text>
</comment>
<comment type="sequence caution" evidence="7">
    <conflict type="frameshift">
        <sequence resource="EMBL-CDS" id="BAE38997"/>
    </conflict>
</comment>
<keyword id="KW-0025">Alternative splicing</keyword>
<keyword id="KW-0072">Autophagy</keyword>
<keyword id="KW-0175">Coiled coil</keyword>
<keyword id="KW-0963">Cytoplasm</keyword>
<keyword id="KW-0968">Cytoplasmic vesicle</keyword>
<keyword id="KW-0206">Cytoskeleton</keyword>
<keyword id="KW-0472">Membrane</keyword>
<keyword id="KW-1185">Reference proteome</keyword>
<dbReference type="EMBL" id="AF490344">
    <property type="protein sequence ID" value="AAO84502.1"/>
    <property type="molecule type" value="mRNA"/>
</dbReference>
<dbReference type="EMBL" id="AK010816">
    <property type="protein sequence ID" value="BAB27200.1"/>
    <property type="molecule type" value="mRNA"/>
</dbReference>
<dbReference type="EMBL" id="AK166710">
    <property type="protein sequence ID" value="BAE38963.1"/>
    <property type="molecule type" value="mRNA"/>
</dbReference>
<dbReference type="EMBL" id="AK166756">
    <property type="protein sequence ID" value="BAE38997.1"/>
    <property type="status" value="ALT_FRAME"/>
    <property type="molecule type" value="mRNA"/>
</dbReference>
<dbReference type="EMBL" id="AK167172">
    <property type="protein sequence ID" value="BAE39309.1"/>
    <property type="molecule type" value="mRNA"/>
</dbReference>
<dbReference type="EMBL" id="AL603682">
    <property type="status" value="NOT_ANNOTATED_CDS"/>
    <property type="molecule type" value="Genomic_DNA"/>
</dbReference>
<dbReference type="CCDS" id="CCDS59567.1">
    <molecule id="A2A6M5-1"/>
</dbReference>
<dbReference type="RefSeq" id="NP_001257947.1">
    <molecule id="A2A6M5-1"/>
    <property type="nucleotide sequence ID" value="NM_001271018.2"/>
</dbReference>
<dbReference type="SMR" id="A2A6M5"/>
<dbReference type="BioGRID" id="218333">
    <property type="interactions" value="5"/>
</dbReference>
<dbReference type="FunCoup" id="A2A6M5">
    <property type="interactions" value="3"/>
</dbReference>
<dbReference type="STRING" id="10090.ENSMUSP00000087407"/>
<dbReference type="PhosphoSitePlus" id="A2A6M5"/>
<dbReference type="PaxDb" id="10090-ENSMUSP00000087407"/>
<dbReference type="Antibodypedia" id="17875">
    <property type="antibodies" value="467 antibodies from 28 providers"/>
</dbReference>
<dbReference type="DNASU" id="76815"/>
<dbReference type="Ensembl" id="ENSMUST00000068686.13">
    <molecule id="A2A6M5-1"/>
    <property type="protein sequence ID" value="ENSMUSP00000087407.5"/>
    <property type="gene ID" value="ENSMUSG00000006056.15"/>
</dbReference>
<dbReference type="GeneID" id="76815"/>
<dbReference type="KEGG" id="mmu:76815"/>
<dbReference type="UCSC" id="uc033fzk.1">
    <molecule id="A2A6M5-1"/>
    <property type="organism name" value="mouse"/>
</dbReference>
<dbReference type="AGR" id="MGI:1343177"/>
<dbReference type="CTD" id="10241"/>
<dbReference type="MGI" id="MGI:1343177">
    <property type="gene designation" value="Calcoco2"/>
</dbReference>
<dbReference type="VEuPathDB" id="HostDB:ENSMUSG00000006056"/>
<dbReference type="eggNOG" id="ENOG502QT1M">
    <property type="taxonomic scope" value="Eukaryota"/>
</dbReference>
<dbReference type="GeneTree" id="ENSGT00950000183025"/>
<dbReference type="InParanoid" id="A2A6M5"/>
<dbReference type="OMA" id="DIMIVIN"/>
<dbReference type="OrthoDB" id="10015001at2759"/>
<dbReference type="PhylomeDB" id="A2A6M5"/>
<dbReference type="TreeFam" id="TF329501"/>
<dbReference type="BioGRID-ORCS" id="76815">
    <property type="hits" value="1 hit in 74 CRISPR screens"/>
</dbReference>
<dbReference type="ChiTaRS" id="Calcoco2">
    <property type="organism name" value="mouse"/>
</dbReference>
<dbReference type="PRO" id="PR:A2A6M5"/>
<dbReference type="Proteomes" id="UP000000589">
    <property type="component" value="Chromosome 11"/>
</dbReference>
<dbReference type="RNAct" id="A2A6M5">
    <property type="molecule type" value="protein"/>
</dbReference>
<dbReference type="Bgee" id="ENSMUSG00000006056">
    <property type="expression patterns" value="Expressed in morula and 53 other cell types or tissues"/>
</dbReference>
<dbReference type="ExpressionAtlas" id="A2A6M5">
    <property type="expression patterns" value="baseline and differential"/>
</dbReference>
<dbReference type="GO" id="GO:0005776">
    <property type="term" value="C:autophagosome"/>
    <property type="evidence" value="ECO:0000250"/>
    <property type="project" value="GO_Central"/>
</dbReference>
<dbReference type="GO" id="GO:0000421">
    <property type="term" value="C:autophagosome membrane"/>
    <property type="evidence" value="ECO:0007669"/>
    <property type="project" value="UniProtKB-SubCell"/>
</dbReference>
<dbReference type="GO" id="GO:0005737">
    <property type="term" value="C:cytoplasm"/>
    <property type="evidence" value="ECO:0000250"/>
    <property type="project" value="HGNC-UCL"/>
</dbReference>
<dbReference type="GO" id="GO:0031410">
    <property type="term" value="C:cytoplasmic vesicle"/>
    <property type="evidence" value="ECO:0007669"/>
    <property type="project" value="UniProtKB-KW"/>
</dbReference>
<dbReference type="GO" id="GO:0005856">
    <property type="term" value="C:cytoskeleton"/>
    <property type="evidence" value="ECO:0007669"/>
    <property type="project" value="UniProtKB-SubCell"/>
</dbReference>
<dbReference type="GO" id="GO:0048471">
    <property type="term" value="C:perinuclear region of cytoplasm"/>
    <property type="evidence" value="ECO:0007669"/>
    <property type="project" value="UniProtKB-SubCell"/>
</dbReference>
<dbReference type="GO" id="GO:0016605">
    <property type="term" value="C:PML body"/>
    <property type="evidence" value="ECO:0000266"/>
    <property type="project" value="MGI"/>
</dbReference>
<dbReference type="GO" id="GO:1901098">
    <property type="term" value="P:positive regulation of autophagosome maturation"/>
    <property type="evidence" value="ECO:0000250"/>
    <property type="project" value="GO_Central"/>
</dbReference>
<dbReference type="GO" id="GO:0098792">
    <property type="term" value="P:xenophagy"/>
    <property type="evidence" value="ECO:0000250"/>
    <property type="project" value="GO_Central"/>
</dbReference>
<dbReference type="FunFam" id="2.60.40.2840:FF:000002">
    <property type="entry name" value="Tax1-binding protein 1 isoform 2"/>
    <property type="match status" value="1"/>
</dbReference>
<dbReference type="Gene3D" id="2.60.40.2840">
    <property type="match status" value="1"/>
</dbReference>
<dbReference type="InterPro" id="IPR041611">
    <property type="entry name" value="SKICH"/>
</dbReference>
<dbReference type="InterPro" id="IPR051002">
    <property type="entry name" value="UBA_autophagy_assoc_protein"/>
</dbReference>
<dbReference type="PANTHER" id="PTHR31915:SF4">
    <property type="entry name" value="CALCIUM-BINDING AND COILED-COIL DOMAIN-CONTAINING PROTEIN 2"/>
    <property type="match status" value="1"/>
</dbReference>
<dbReference type="PANTHER" id="PTHR31915">
    <property type="entry name" value="SKICH DOMAIN-CONTAINING PROTEIN"/>
    <property type="match status" value="1"/>
</dbReference>
<dbReference type="Pfam" id="PF17751">
    <property type="entry name" value="SKICH"/>
    <property type="match status" value="1"/>
</dbReference>
<name>CACO2_MOUSE</name>
<reference key="1">
    <citation type="journal article" date="2003" name="Development">
        <title>Incomplete reactivation of Oct4-related genes in mouse embryos cloned from somatic nuclei.</title>
        <authorList>
            <person name="Bortvin A."/>
            <person name="Eggan K."/>
            <person name="Skaletsky H."/>
            <person name="Akutsu H."/>
            <person name="Berry D.L."/>
            <person name="Yanagimachi R."/>
            <person name="Page D.C."/>
            <person name="Jaenisch R."/>
        </authorList>
    </citation>
    <scope>NUCLEOTIDE SEQUENCE [MRNA] (ISOFORM 2)</scope>
    <scope>DEVELOPMENTAL STAGE</scope>
</reference>
<reference key="2">
    <citation type="journal article" date="2005" name="Science">
        <title>The transcriptional landscape of the mammalian genome.</title>
        <authorList>
            <person name="Carninci P."/>
            <person name="Kasukawa T."/>
            <person name="Katayama S."/>
            <person name="Gough J."/>
            <person name="Frith M.C."/>
            <person name="Maeda N."/>
            <person name="Oyama R."/>
            <person name="Ravasi T."/>
            <person name="Lenhard B."/>
            <person name="Wells C."/>
            <person name="Kodzius R."/>
            <person name="Shimokawa K."/>
            <person name="Bajic V.B."/>
            <person name="Brenner S.E."/>
            <person name="Batalov S."/>
            <person name="Forrest A.R."/>
            <person name="Zavolan M."/>
            <person name="Davis M.J."/>
            <person name="Wilming L.G."/>
            <person name="Aidinis V."/>
            <person name="Allen J.E."/>
            <person name="Ambesi-Impiombato A."/>
            <person name="Apweiler R."/>
            <person name="Aturaliya R.N."/>
            <person name="Bailey T.L."/>
            <person name="Bansal M."/>
            <person name="Baxter L."/>
            <person name="Beisel K.W."/>
            <person name="Bersano T."/>
            <person name="Bono H."/>
            <person name="Chalk A.M."/>
            <person name="Chiu K.P."/>
            <person name="Choudhary V."/>
            <person name="Christoffels A."/>
            <person name="Clutterbuck D.R."/>
            <person name="Crowe M.L."/>
            <person name="Dalla E."/>
            <person name="Dalrymple B.P."/>
            <person name="de Bono B."/>
            <person name="Della Gatta G."/>
            <person name="di Bernardo D."/>
            <person name="Down T."/>
            <person name="Engstrom P."/>
            <person name="Fagiolini M."/>
            <person name="Faulkner G."/>
            <person name="Fletcher C.F."/>
            <person name="Fukushima T."/>
            <person name="Furuno M."/>
            <person name="Futaki S."/>
            <person name="Gariboldi M."/>
            <person name="Georgii-Hemming P."/>
            <person name="Gingeras T.R."/>
            <person name="Gojobori T."/>
            <person name="Green R.E."/>
            <person name="Gustincich S."/>
            <person name="Harbers M."/>
            <person name="Hayashi Y."/>
            <person name="Hensch T.K."/>
            <person name="Hirokawa N."/>
            <person name="Hill D."/>
            <person name="Huminiecki L."/>
            <person name="Iacono M."/>
            <person name="Ikeo K."/>
            <person name="Iwama A."/>
            <person name="Ishikawa T."/>
            <person name="Jakt M."/>
            <person name="Kanapin A."/>
            <person name="Katoh M."/>
            <person name="Kawasawa Y."/>
            <person name="Kelso J."/>
            <person name="Kitamura H."/>
            <person name="Kitano H."/>
            <person name="Kollias G."/>
            <person name="Krishnan S.P."/>
            <person name="Kruger A."/>
            <person name="Kummerfeld S.K."/>
            <person name="Kurochkin I.V."/>
            <person name="Lareau L.F."/>
            <person name="Lazarevic D."/>
            <person name="Lipovich L."/>
            <person name="Liu J."/>
            <person name="Liuni S."/>
            <person name="McWilliam S."/>
            <person name="Madan Babu M."/>
            <person name="Madera M."/>
            <person name="Marchionni L."/>
            <person name="Matsuda H."/>
            <person name="Matsuzawa S."/>
            <person name="Miki H."/>
            <person name="Mignone F."/>
            <person name="Miyake S."/>
            <person name="Morris K."/>
            <person name="Mottagui-Tabar S."/>
            <person name="Mulder N."/>
            <person name="Nakano N."/>
            <person name="Nakauchi H."/>
            <person name="Ng P."/>
            <person name="Nilsson R."/>
            <person name="Nishiguchi S."/>
            <person name="Nishikawa S."/>
            <person name="Nori F."/>
            <person name="Ohara O."/>
            <person name="Okazaki Y."/>
            <person name="Orlando V."/>
            <person name="Pang K.C."/>
            <person name="Pavan W.J."/>
            <person name="Pavesi G."/>
            <person name="Pesole G."/>
            <person name="Petrovsky N."/>
            <person name="Piazza S."/>
            <person name="Reed J."/>
            <person name="Reid J.F."/>
            <person name="Ring B.Z."/>
            <person name="Ringwald M."/>
            <person name="Rost B."/>
            <person name="Ruan Y."/>
            <person name="Salzberg S.L."/>
            <person name="Sandelin A."/>
            <person name="Schneider C."/>
            <person name="Schoenbach C."/>
            <person name="Sekiguchi K."/>
            <person name="Semple C.A."/>
            <person name="Seno S."/>
            <person name="Sessa L."/>
            <person name="Sheng Y."/>
            <person name="Shibata Y."/>
            <person name="Shimada H."/>
            <person name="Shimada K."/>
            <person name="Silva D."/>
            <person name="Sinclair B."/>
            <person name="Sperling S."/>
            <person name="Stupka E."/>
            <person name="Sugiura K."/>
            <person name="Sultana R."/>
            <person name="Takenaka Y."/>
            <person name="Taki K."/>
            <person name="Tammoja K."/>
            <person name="Tan S.L."/>
            <person name="Tang S."/>
            <person name="Taylor M.S."/>
            <person name="Tegner J."/>
            <person name="Teichmann S.A."/>
            <person name="Ueda H.R."/>
            <person name="van Nimwegen E."/>
            <person name="Verardo R."/>
            <person name="Wei C.L."/>
            <person name="Yagi K."/>
            <person name="Yamanishi H."/>
            <person name="Zabarovsky E."/>
            <person name="Zhu S."/>
            <person name="Zimmer A."/>
            <person name="Hide W."/>
            <person name="Bult C."/>
            <person name="Grimmond S.M."/>
            <person name="Teasdale R.D."/>
            <person name="Liu E.T."/>
            <person name="Brusic V."/>
            <person name="Quackenbush J."/>
            <person name="Wahlestedt C."/>
            <person name="Mattick J.S."/>
            <person name="Hume D.A."/>
            <person name="Kai C."/>
            <person name="Sasaki D."/>
            <person name="Tomaru Y."/>
            <person name="Fukuda S."/>
            <person name="Kanamori-Katayama M."/>
            <person name="Suzuki M."/>
            <person name="Aoki J."/>
            <person name="Arakawa T."/>
            <person name="Iida J."/>
            <person name="Imamura K."/>
            <person name="Itoh M."/>
            <person name="Kato T."/>
            <person name="Kawaji H."/>
            <person name="Kawagashira N."/>
            <person name="Kawashima T."/>
            <person name="Kojima M."/>
            <person name="Kondo S."/>
            <person name="Konno H."/>
            <person name="Nakano K."/>
            <person name="Ninomiya N."/>
            <person name="Nishio T."/>
            <person name="Okada M."/>
            <person name="Plessy C."/>
            <person name="Shibata K."/>
            <person name="Shiraki T."/>
            <person name="Suzuki S."/>
            <person name="Tagami M."/>
            <person name="Waki K."/>
            <person name="Watahiki A."/>
            <person name="Okamura-Oho Y."/>
            <person name="Suzuki H."/>
            <person name="Kawai J."/>
            <person name="Hayashizaki Y."/>
        </authorList>
    </citation>
    <scope>NUCLEOTIDE SEQUENCE [LARGE SCALE MRNA] (ISOFORMS 2; 3; 4 AND 5)</scope>
    <source>
        <strain>C57BL/6J</strain>
        <tissue>Blastocyst</tissue>
    </source>
</reference>
<reference key="3">
    <citation type="journal article" date="2009" name="PLoS Biol.">
        <title>Lineage-specific biology revealed by a finished genome assembly of the mouse.</title>
        <authorList>
            <person name="Church D.M."/>
            <person name="Goodstadt L."/>
            <person name="Hillier L.W."/>
            <person name="Zody M.C."/>
            <person name="Goldstein S."/>
            <person name="She X."/>
            <person name="Bult C.J."/>
            <person name="Agarwala R."/>
            <person name="Cherry J.L."/>
            <person name="DiCuccio M."/>
            <person name="Hlavina W."/>
            <person name="Kapustin Y."/>
            <person name="Meric P."/>
            <person name="Maglott D."/>
            <person name="Birtle Z."/>
            <person name="Marques A.C."/>
            <person name="Graves T."/>
            <person name="Zhou S."/>
            <person name="Teague B."/>
            <person name="Potamousis K."/>
            <person name="Churas C."/>
            <person name="Place M."/>
            <person name="Herschleb J."/>
            <person name="Runnheim R."/>
            <person name="Forrest D."/>
            <person name="Amos-Landgraf J."/>
            <person name="Schwartz D.C."/>
            <person name="Cheng Z."/>
            <person name="Lindblad-Toh K."/>
            <person name="Eichler E.E."/>
            <person name="Ponting C.P."/>
        </authorList>
    </citation>
    <scope>NUCLEOTIDE SEQUENCE [LARGE SCALE GENOMIC DNA]</scope>
    <source>
        <strain>C57BL/6J</strain>
    </source>
</reference>